<name>Y1815_STAAW</name>
<sequence length="171" mass="18632">MTKKVAIILANEFEDIEYSSPKEALENAGFNTVVIGDTANSEVVGKHGEKVTVDVGIAEAKPEDYDALLIPGGFSPDHLRGDTEGRYGTFAKYFTKNDVPTFAICHGPQILIDTDDLKGRTLTAVLNVRKDLSNAGAHVVDESVVVDNNIVTSRVPDDLDDFNREIVKQLQ</sequence>
<evidence type="ECO:0000255" key="1">
    <source>
        <dbReference type="PROSITE-ProRule" id="PRU00608"/>
    </source>
</evidence>
<evidence type="ECO:0000305" key="2"/>
<dbReference type="EMBL" id="BA000033">
    <property type="protein sequence ID" value="BAB95680.1"/>
    <property type="molecule type" value="Genomic_DNA"/>
</dbReference>
<dbReference type="RefSeq" id="WP_000163283.1">
    <property type="nucleotide sequence ID" value="NC_003923.1"/>
</dbReference>
<dbReference type="SMR" id="P0A0K2"/>
<dbReference type="MEROPS" id="C56.001"/>
<dbReference type="KEGG" id="sam:MW1815"/>
<dbReference type="HOGENOM" id="CLU_000445_44_4_9"/>
<dbReference type="CDD" id="cd03134">
    <property type="entry name" value="GATase1_PfpI_like"/>
    <property type="match status" value="1"/>
</dbReference>
<dbReference type="Gene3D" id="3.40.50.880">
    <property type="match status" value="1"/>
</dbReference>
<dbReference type="InterPro" id="IPR006286">
    <property type="entry name" value="C56_PfpI-like"/>
</dbReference>
<dbReference type="InterPro" id="IPR029062">
    <property type="entry name" value="Class_I_gatase-like"/>
</dbReference>
<dbReference type="InterPro" id="IPR002818">
    <property type="entry name" value="DJ-1/PfpI"/>
</dbReference>
<dbReference type="NCBIfam" id="TIGR01382">
    <property type="entry name" value="PfpI"/>
    <property type="match status" value="1"/>
</dbReference>
<dbReference type="PANTHER" id="PTHR42733">
    <property type="entry name" value="DJ-1 PROTEIN"/>
    <property type="match status" value="1"/>
</dbReference>
<dbReference type="PANTHER" id="PTHR42733:SF2">
    <property type="entry name" value="DJ-1_THIJ_PFPI FAMILY PROTEIN"/>
    <property type="match status" value="1"/>
</dbReference>
<dbReference type="Pfam" id="PF01965">
    <property type="entry name" value="DJ-1_PfpI"/>
    <property type="match status" value="1"/>
</dbReference>
<dbReference type="SUPFAM" id="SSF52317">
    <property type="entry name" value="Class I glutamine amidotransferase-like"/>
    <property type="match status" value="1"/>
</dbReference>
<dbReference type="PROSITE" id="PS51276">
    <property type="entry name" value="PEPTIDASE_C56_PFPI"/>
    <property type="match status" value="1"/>
</dbReference>
<gene>
    <name type="ordered locus">MW1815</name>
</gene>
<comment type="similarity">
    <text evidence="2">Belongs to the peptidase C56 family.</text>
</comment>
<organism>
    <name type="scientific">Staphylococcus aureus (strain MW2)</name>
    <dbReference type="NCBI Taxonomy" id="196620"/>
    <lineage>
        <taxon>Bacteria</taxon>
        <taxon>Bacillati</taxon>
        <taxon>Bacillota</taxon>
        <taxon>Bacilli</taxon>
        <taxon>Bacillales</taxon>
        <taxon>Staphylococcaceae</taxon>
        <taxon>Staphylococcus</taxon>
    </lineage>
</organism>
<feature type="chain" id="PRO_0000157839" description="Uncharacterized protein MW1815">
    <location>
        <begin position="1"/>
        <end position="171"/>
    </location>
</feature>
<feature type="domain" description="PfpI endopeptidase" evidence="1">
    <location>
        <begin position="3"/>
        <end position="171"/>
    </location>
</feature>
<proteinExistence type="inferred from homology"/>
<reference key="1">
    <citation type="journal article" date="2002" name="Lancet">
        <title>Genome and virulence determinants of high virulence community-acquired MRSA.</title>
        <authorList>
            <person name="Baba T."/>
            <person name="Takeuchi F."/>
            <person name="Kuroda M."/>
            <person name="Yuzawa H."/>
            <person name="Aoki K."/>
            <person name="Oguchi A."/>
            <person name="Nagai Y."/>
            <person name="Iwama N."/>
            <person name="Asano K."/>
            <person name="Naimi T."/>
            <person name="Kuroda H."/>
            <person name="Cui L."/>
            <person name="Yamamoto K."/>
            <person name="Hiramatsu K."/>
        </authorList>
    </citation>
    <scope>NUCLEOTIDE SEQUENCE [LARGE SCALE GENOMIC DNA]</scope>
    <source>
        <strain>MW2</strain>
    </source>
</reference>
<accession>P0A0K2</accession>
<accession>Q53719</accession>
<protein>
    <recommendedName>
        <fullName>Uncharacterized protein MW1815</fullName>
    </recommendedName>
</protein>